<accession>B7M4H4</accession>
<organism>
    <name type="scientific">Escherichia coli O8 (strain IAI1)</name>
    <dbReference type="NCBI Taxonomy" id="585034"/>
    <lineage>
        <taxon>Bacteria</taxon>
        <taxon>Pseudomonadati</taxon>
        <taxon>Pseudomonadota</taxon>
        <taxon>Gammaproteobacteria</taxon>
        <taxon>Enterobacterales</taxon>
        <taxon>Enterobacteriaceae</taxon>
        <taxon>Escherichia</taxon>
    </lineage>
</organism>
<dbReference type="EMBL" id="CU928160">
    <property type="protein sequence ID" value="CAR00658.1"/>
    <property type="molecule type" value="Genomic_DNA"/>
</dbReference>
<dbReference type="RefSeq" id="WP_001279752.1">
    <property type="nucleotide sequence ID" value="NC_011741.1"/>
</dbReference>
<dbReference type="SMR" id="B7M4H4"/>
<dbReference type="KEGG" id="ecr:ECIAI1_3863"/>
<dbReference type="HOGENOM" id="CLU_035023_3_1_6"/>
<dbReference type="GO" id="GO:0005886">
    <property type="term" value="C:plasma membrane"/>
    <property type="evidence" value="ECO:0007669"/>
    <property type="project" value="UniProtKB-SubCell"/>
</dbReference>
<dbReference type="GO" id="GO:0008324">
    <property type="term" value="F:monoatomic cation transmembrane transporter activity"/>
    <property type="evidence" value="ECO:0007669"/>
    <property type="project" value="InterPro"/>
</dbReference>
<dbReference type="GO" id="GO:0006813">
    <property type="term" value="P:potassium ion transport"/>
    <property type="evidence" value="ECO:0007669"/>
    <property type="project" value="InterPro"/>
</dbReference>
<dbReference type="FunFam" id="3.30.70.1450:FF:000004">
    <property type="entry name" value="Putative transport protein YidE"/>
    <property type="match status" value="1"/>
</dbReference>
<dbReference type="Gene3D" id="3.30.70.1450">
    <property type="entry name" value="Regulator of K+ conductance, C-terminal domain"/>
    <property type="match status" value="2"/>
</dbReference>
<dbReference type="HAMAP" id="MF_01016">
    <property type="entry name" value="YidE"/>
    <property type="match status" value="1"/>
</dbReference>
<dbReference type="InterPro" id="IPR050144">
    <property type="entry name" value="AAE_transporter"/>
</dbReference>
<dbReference type="InterPro" id="IPR006037">
    <property type="entry name" value="RCK_C"/>
</dbReference>
<dbReference type="InterPro" id="IPR036721">
    <property type="entry name" value="RCK_C_sf"/>
</dbReference>
<dbReference type="InterPro" id="IPR023018">
    <property type="entry name" value="Transpt_YidE_put"/>
</dbReference>
<dbReference type="InterPro" id="IPR006512">
    <property type="entry name" value="YidE_YbjL"/>
</dbReference>
<dbReference type="NCBIfam" id="NF003007">
    <property type="entry name" value="PRK03818.1"/>
    <property type="match status" value="1"/>
</dbReference>
<dbReference type="NCBIfam" id="TIGR01625">
    <property type="entry name" value="YidE_YbjL_dupl"/>
    <property type="match status" value="2"/>
</dbReference>
<dbReference type="PANTHER" id="PTHR30445">
    <property type="entry name" value="K(+)_H(+) ANTIPORTER SUBUNIT KHTT"/>
    <property type="match status" value="1"/>
</dbReference>
<dbReference type="PANTHER" id="PTHR30445:SF3">
    <property type="entry name" value="TRANSPORT PROTEIN YIDE-RELATED"/>
    <property type="match status" value="1"/>
</dbReference>
<dbReference type="Pfam" id="PF06826">
    <property type="entry name" value="Asp-Al_Ex"/>
    <property type="match status" value="2"/>
</dbReference>
<dbReference type="Pfam" id="PF02080">
    <property type="entry name" value="TrkA_C"/>
    <property type="match status" value="2"/>
</dbReference>
<dbReference type="SUPFAM" id="SSF116726">
    <property type="entry name" value="TrkA C-terminal domain-like"/>
    <property type="match status" value="2"/>
</dbReference>
<dbReference type="PROSITE" id="PS51202">
    <property type="entry name" value="RCK_C"/>
    <property type="match status" value="2"/>
</dbReference>
<sequence length="553" mass="58939">MSDIALTVSILALVAVVGLFIGNVKFRGIGLGIGGVLFGGIIVGHFVSQAGMTLSSDMLHVIQEFGLILFVYTIGIQVGPGFFASLRVSGLRLNLFAVLIVIIGGLVTAILHKLFDIPLPVVLGIFSGAVTNTPALGAGQQILRDLGTPMEMVDQMGMSYAMAYPFGICGILFTMWMLRVIFRVNVETEAQQHESSRTNGGALIKTINIRVENPNLHDLAIKDVPILNGDKIICSRLKREETLKVPSPDTIIQLGDLLHLVGQPADLHNAQLVIGQEVDTSLSTKGTDLRVERVVVTNENVLGKRIRDLHFKERYDVVISRLNRAGVELVASGDISLQFGDILNLVGRPSAIDAVANVLGNAQQKLQQVQMLPVFIGIGLGVLLGSIPVFVPGFPAALKLGLAGGPLIMALILGRIGSIGKLYWFMPPSANLALRELGIVLFLSVVGLKSGGDFVNTLVNGEGLSWIGYGALITAVPLITVGILARMLAKMNYLTMCGMLAGSMTDPPALAFANNLHPTSGAAALSYATVYPLVMFLRIITPQLLAVLFWSIG</sequence>
<feature type="chain" id="PRO_1000135206" description="Putative transport protein YidE">
    <location>
        <begin position="1"/>
        <end position="553"/>
    </location>
</feature>
<feature type="transmembrane region" description="Helical" evidence="1">
    <location>
        <begin position="4"/>
        <end position="24"/>
    </location>
</feature>
<feature type="transmembrane region" description="Helical" evidence="1">
    <location>
        <begin position="28"/>
        <end position="48"/>
    </location>
</feature>
<feature type="transmembrane region" description="Helical" evidence="1">
    <location>
        <begin position="65"/>
        <end position="85"/>
    </location>
</feature>
<feature type="transmembrane region" description="Helical" evidence="1">
    <location>
        <begin position="95"/>
        <end position="115"/>
    </location>
</feature>
<feature type="transmembrane region" description="Helical" evidence="1">
    <location>
        <begin position="158"/>
        <end position="178"/>
    </location>
</feature>
<feature type="transmembrane region" description="Helical" evidence="1">
    <location>
        <begin position="371"/>
        <end position="391"/>
    </location>
</feature>
<feature type="transmembrane region" description="Helical" evidence="1">
    <location>
        <begin position="393"/>
        <end position="413"/>
    </location>
</feature>
<feature type="transmembrane region" description="Helical" evidence="1">
    <location>
        <begin position="439"/>
        <end position="459"/>
    </location>
</feature>
<feature type="transmembrane region" description="Helical" evidence="1">
    <location>
        <begin position="464"/>
        <end position="484"/>
    </location>
</feature>
<feature type="transmembrane region" description="Helical" evidence="1">
    <location>
        <begin position="493"/>
        <end position="513"/>
    </location>
</feature>
<feature type="transmembrane region" description="Helical" evidence="1">
    <location>
        <begin position="533"/>
        <end position="553"/>
    </location>
</feature>
<feature type="domain" description="RCK C-terminal 1" evidence="1">
    <location>
        <begin position="191"/>
        <end position="276"/>
    </location>
</feature>
<feature type="domain" description="RCK C-terminal 2" evidence="1">
    <location>
        <begin position="279"/>
        <end position="361"/>
    </location>
</feature>
<comment type="subcellular location">
    <subcellularLocation>
        <location evidence="1">Cell membrane</location>
        <topology evidence="1">Multi-pass membrane protein</topology>
    </subcellularLocation>
</comment>
<comment type="similarity">
    <text evidence="1">Belongs to the AAE transporter (TC 2.A.81) family. YidE subfamily.</text>
</comment>
<name>YIDE_ECO8A</name>
<protein>
    <recommendedName>
        <fullName evidence="1">Putative transport protein YidE</fullName>
    </recommendedName>
</protein>
<proteinExistence type="inferred from homology"/>
<keyword id="KW-1003">Cell membrane</keyword>
<keyword id="KW-0472">Membrane</keyword>
<keyword id="KW-0677">Repeat</keyword>
<keyword id="KW-0812">Transmembrane</keyword>
<keyword id="KW-1133">Transmembrane helix</keyword>
<keyword id="KW-0813">Transport</keyword>
<gene>
    <name evidence="1" type="primary">yidE</name>
    <name type="ordered locus">ECIAI1_3863</name>
</gene>
<reference key="1">
    <citation type="journal article" date="2009" name="PLoS Genet.">
        <title>Organised genome dynamics in the Escherichia coli species results in highly diverse adaptive paths.</title>
        <authorList>
            <person name="Touchon M."/>
            <person name="Hoede C."/>
            <person name="Tenaillon O."/>
            <person name="Barbe V."/>
            <person name="Baeriswyl S."/>
            <person name="Bidet P."/>
            <person name="Bingen E."/>
            <person name="Bonacorsi S."/>
            <person name="Bouchier C."/>
            <person name="Bouvet O."/>
            <person name="Calteau A."/>
            <person name="Chiapello H."/>
            <person name="Clermont O."/>
            <person name="Cruveiller S."/>
            <person name="Danchin A."/>
            <person name="Diard M."/>
            <person name="Dossat C."/>
            <person name="Karoui M.E."/>
            <person name="Frapy E."/>
            <person name="Garry L."/>
            <person name="Ghigo J.M."/>
            <person name="Gilles A.M."/>
            <person name="Johnson J."/>
            <person name="Le Bouguenec C."/>
            <person name="Lescat M."/>
            <person name="Mangenot S."/>
            <person name="Martinez-Jehanne V."/>
            <person name="Matic I."/>
            <person name="Nassif X."/>
            <person name="Oztas S."/>
            <person name="Petit M.A."/>
            <person name="Pichon C."/>
            <person name="Rouy Z."/>
            <person name="Ruf C.S."/>
            <person name="Schneider D."/>
            <person name="Tourret J."/>
            <person name="Vacherie B."/>
            <person name="Vallenet D."/>
            <person name="Medigue C."/>
            <person name="Rocha E.P.C."/>
            <person name="Denamur E."/>
        </authorList>
    </citation>
    <scope>NUCLEOTIDE SEQUENCE [LARGE SCALE GENOMIC DNA]</scope>
    <source>
        <strain>IAI1</strain>
    </source>
</reference>
<evidence type="ECO:0000255" key="1">
    <source>
        <dbReference type="HAMAP-Rule" id="MF_01016"/>
    </source>
</evidence>